<sequence length="119" mass="14183">MPDYSYRPTIGPTYVYHNKYYKNLGSVIKKPKRKKHLVEHEEEEKDPLDNYMVAEDPFLGPGKNQKLTLFKEIRNVKPDTMKLIVNWSGKEFLRETWTRFVEDSFPIVNDQEVMDVFLV</sequence>
<organism>
    <name type="scientific">Antheraea pernyi nuclear polyhedrosis virus</name>
    <name type="common">ApNPV</name>
    <dbReference type="NCBI Taxonomy" id="161494"/>
    <lineage>
        <taxon>Viruses</taxon>
        <taxon>Viruses incertae sedis</taxon>
        <taxon>Naldaviricetes</taxon>
        <taxon>Lefavirales</taxon>
        <taxon>Baculoviridae</taxon>
        <taxon>Alphabaculovirus</taxon>
        <taxon>Alphabaculovirus anpernyi</taxon>
    </lineage>
</organism>
<proteinExistence type="inferred from homology"/>
<organismHost>
    <name type="scientific">Antheraea pernyi</name>
    <name type="common">Chinese oak silk moth</name>
    <name type="synonym">Bombyx pernyi</name>
    <dbReference type="NCBI Taxonomy" id="7119"/>
</organismHost>
<dbReference type="EMBL" id="M57666">
    <property type="protein sequence ID" value="AAA46735.1"/>
    <property type="molecule type" value="Genomic_DNA"/>
</dbReference>
<dbReference type="EMBL" id="M57429">
    <property type="protein sequence ID" value="AAA46738.1"/>
    <property type="molecule type" value="Genomic_DNA"/>
</dbReference>
<dbReference type="SMR" id="P41711"/>
<dbReference type="GO" id="GO:0039679">
    <property type="term" value="C:viral occlusion body"/>
    <property type="evidence" value="ECO:0007669"/>
    <property type="project" value="UniProtKB-KW"/>
</dbReference>
<dbReference type="GO" id="GO:0005198">
    <property type="term" value="F:structural molecule activity"/>
    <property type="evidence" value="ECO:0007669"/>
    <property type="project" value="InterPro"/>
</dbReference>
<dbReference type="InterPro" id="IPR001746">
    <property type="entry name" value="Polyhedrin"/>
</dbReference>
<dbReference type="Pfam" id="PF00738">
    <property type="entry name" value="Polyhedrin"/>
    <property type="match status" value="1"/>
</dbReference>
<comment type="function">
    <text>Major component of the virus occlusion bodies, which are large proteinaceous structures (polyhedra), that protect the virus from the outside environment for extended periods until they are ingested by insect larvae.</text>
</comment>
<comment type="similarity">
    <text evidence="1">Belongs to the polyhedrin family.</text>
</comment>
<keyword id="KW-0842">Viral occlusion body</keyword>
<reference key="1">
    <citation type="journal article" date="1988" name="Ping Tu Hsueh Pao">
        <title>Sequence of noncoding region at 5' end of polyhedrin gene from Antheraea pernyi nuclear polyhedrosis virus (ApNPV).</title>
        <authorList>
            <person name="Yuwen H."/>
            <person name="Qi F."/>
            <person name="Chunfa Z."/>
            <person name="Yunde H."/>
            <person name="Gungzhe L."/>
        </authorList>
    </citation>
    <scope>NUCLEOTIDE SEQUENCE [GENOMIC DNA] OF 1-45</scope>
</reference>
<reference key="2">
    <citation type="journal article" date="1987" name="Ping Tu Hsueh Pao">
        <title>Location and cloning of polyhedrin gene of Antheraea pernyi nuclear polyhedrosis virus.</title>
        <authorList>
            <person name="Yuwen H."/>
            <person name="Qi F."/>
            <person name="Chunfa Z."/>
            <person name="Yunte H."/>
            <person name="Guangze L."/>
            <person name="Shushan L."/>
            <person name="Long H."/>
            <person name="Qi J."/>
        </authorList>
    </citation>
    <scope>NUCLEOTIDE SEQUENCE [GENOMIC DNA] OF 46-119</scope>
</reference>
<protein>
    <recommendedName>
        <fullName>Polyhedrin</fullName>
    </recommendedName>
    <alternativeName>
        <fullName>Major occlusion protein</fullName>
    </alternativeName>
</protein>
<name>PYHD_NPVAP</name>
<evidence type="ECO:0000305" key="1"/>
<accession>P41711</accession>
<gene>
    <name type="primary">PH</name>
    <name type="synonym">P29</name>
    <name type="synonym">POLH</name>
</gene>
<feature type="chain" id="PRO_0000217245" description="Polyhedrin">
    <location>
        <begin position="1"/>
        <end position="119"/>
    </location>
</feature>
<feature type="non-consecutive residues" evidence="1">
    <location>
        <begin position="45"/>
        <end position="46"/>
    </location>
</feature>